<reference key="1">
    <citation type="submission" date="2007-08" db="EMBL/GenBank/DDBJ databases">
        <authorList>
            <consortium name="The Citrobacter koseri Genome Sequencing Project"/>
            <person name="McClelland M."/>
            <person name="Sanderson E.K."/>
            <person name="Porwollik S."/>
            <person name="Spieth J."/>
            <person name="Clifton W.S."/>
            <person name="Latreille P."/>
            <person name="Courtney L."/>
            <person name="Wang C."/>
            <person name="Pepin K."/>
            <person name="Bhonagiri V."/>
            <person name="Nash W."/>
            <person name="Johnson M."/>
            <person name="Thiruvilangam P."/>
            <person name="Wilson R."/>
        </authorList>
    </citation>
    <scope>NUCLEOTIDE SEQUENCE [LARGE SCALE GENOMIC DNA]</scope>
    <source>
        <strain>ATCC BAA-895 / CDC 4225-83 / SGSC4696</strain>
    </source>
</reference>
<organism>
    <name type="scientific">Citrobacter koseri (strain ATCC BAA-895 / CDC 4225-83 / SGSC4696)</name>
    <dbReference type="NCBI Taxonomy" id="290338"/>
    <lineage>
        <taxon>Bacteria</taxon>
        <taxon>Pseudomonadati</taxon>
        <taxon>Pseudomonadota</taxon>
        <taxon>Gammaproteobacteria</taxon>
        <taxon>Enterobacterales</taxon>
        <taxon>Enterobacteriaceae</taxon>
        <taxon>Citrobacter</taxon>
    </lineage>
</organism>
<name>URE2_CITK8</name>
<accession>A8APU9</accession>
<proteinExistence type="inferred from homology"/>
<evidence type="ECO:0000255" key="1">
    <source>
        <dbReference type="HAMAP-Rule" id="MF_01954"/>
    </source>
</evidence>
<comment type="catalytic activity">
    <reaction evidence="1">
        <text>urea + 2 H2O + H(+) = hydrogencarbonate + 2 NH4(+)</text>
        <dbReference type="Rhea" id="RHEA:20557"/>
        <dbReference type="ChEBI" id="CHEBI:15377"/>
        <dbReference type="ChEBI" id="CHEBI:15378"/>
        <dbReference type="ChEBI" id="CHEBI:16199"/>
        <dbReference type="ChEBI" id="CHEBI:17544"/>
        <dbReference type="ChEBI" id="CHEBI:28938"/>
        <dbReference type="EC" id="3.5.1.5"/>
    </reaction>
</comment>
<comment type="pathway">
    <text evidence="1">Nitrogen metabolism; urea degradation; CO(2) and NH(3) from urea (urease route): step 1/1.</text>
</comment>
<comment type="subunit">
    <text evidence="1">Heterotrimer of UreA (gamma), UreB (beta) and UreC (alpha) subunits. Three heterotrimers associate to form the active enzyme.</text>
</comment>
<comment type="subcellular location">
    <subcellularLocation>
        <location evidence="1">Cytoplasm</location>
    </subcellularLocation>
</comment>
<comment type="similarity">
    <text evidence="1">Belongs to the urease beta subunit family.</text>
</comment>
<dbReference type="EC" id="3.5.1.5" evidence="1"/>
<dbReference type="EMBL" id="CP000822">
    <property type="protein sequence ID" value="ABV15512.1"/>
    <property type="molecule type" value="Genomic_DNA"/>
</dbReference>
<dbReference type="RefSeq" id="WP_012135195.1">
    <property type="nucleotide sequence ID" value="NC_009792.1"/>
</dbReference>
<dbReference type="SMR" id="A8APU9"/>
<dbReference type="STRING" id="290338.CKO_04456"/>
<dbReference type="GeneID" id="45138025"/>
<dbReference type="KEGG" id="cko:CKO_04456"/>
<dbReference type="HOGENOM" id="CLU_129707_1_1_6"/>
<dbReference type="OrthoDB" id="9797217at2"/>
<dbReference type="UniPathway" id="UPA00258">
    <property type="reaction ID" value="UER00370"/>
</dbReference>
<dbReference type="Proteomes" id="UP000008148">
    <property type="component" value="Chromosome"/>
</dbReference>
<dbReference type="GO" id="GO:0035550">
    <property type="term" value="C:urease complex"/>
    <property type="evidence" value="ECO:0007669"/>
    <property type="project" value="InterPro"/>
</dbReference>
<dbReference type="GO" id="GO:0009039">
    <property type="term" value="F:urease activity"/>
    <property type="evidence" value="ECO:0007669"/>
    <property type="project" value="UniProtKB-UniRule"/>
</dbReference>
<dbReference type="GO" id="GO:0043419">
    <property type="term" value="P:urea catabolic process"/>
    <property type="evidence" value="ECO:0007669"/>
    <property type="project" value="UniProtKB-UniRule"/>
</dbReference>
<dbReference type="CDD" id="cd00407">
    <property type="entry name" value="Urease_beta"/>
    <property type="match status" value="1"/>
</dbReference>
<dbReference type="FunFam" id="2.10.150.10:FF:000001">
    <property type="entry name" value="Urease subunit beta"/>
    <property type="match status" value="1"/>
</dbReference>
<dbReference type="Gene3D" id="2.10.150.10">
    <property type="entry name" value="Urease, beta subunit"/>
    <property type="match status" value="1"/>
</dbReference>
<dbReference type="HAMAP" id="MF_01954">
    <property type="entry name" value="Urease_beta"/>
    <property type="match status" value="1"/>
</dbReference>
<dbReference type="InterPro" id="IPR002019">
    <property type="entry name" value="Urease_beta-like"/>
</dbReference>
<dbReference type="InterPro" id="IPR036461">
    <property type="entry name" value="Urease_betasu_sf"/>
</dbReference>
<dbReference type="InterPro" id="IPR050069">
    <property type="entry name" value="Urease_subunit"/>
</dbReference>
<dbReference type="NCBIfam" id="NF009682">
    <property type="entry name" value="PRK13203.1"/>
    <property type="match status" value="1"/>
</dbReference>
<dbReference type="NCBIfam" id="TIGR00192">
    <property type="entry name" value="urease_beta"/>
    <property type="match status" value="1"/>
</dbReference>
<dbReference type="PANTHER" id="PTHR33569">
    <property type="entry name" value="UREASE"/>
    <property type="match status" value="1"/>
</dbReference>
<dbReference type="PANTHER" id="PTHR33569:SF1">
    <property type="entry name" value="UREASE"/>
    <property type="match status" value="1"/>
</dbReference>
<dbReference type="Pfam" id="PF00699">
    <property type="entry name" value="Urease_beta"/>
    <property type="match status" value="1"/>
</dbReference>
<dbReference type="SUPFAM" id="SSF51278">
    <property type="entry name" value="Urease, beta-subunit"/>
    <property type="match status" value="1"/>
</dbReference>
<feature type="chain" id="PRO_1000070730" description="Urease subunit beta">
    <location>
        <begin position="1"/>
        <end position="106"/>
    </location>
</feature>
<keyword id="KW-0963">Cytoplasm</keyword>
<keyword id="KW-0378">Hydrolase</keyword>
<keyword id="KW-1185">Reference proteome</keyword>
<sequence>MIPGEYRISTGNIAINTGRETCTIVVENHGDRPVQVGSHYHFYEVNPALRFDRQAARGFRLNIPAGTAVRFEPGQKREVELVRVAGAQRIFGFRGEVMGSLEADND</sequence>
<protein>
    <recommendedName>
        <fullName evidence="1">Urease subunit beta</fullName>
        <ecNumber evidence="1">3.5.1.5</ecNumber>
    </recommendedName>
    <alternativeName>
        <fullName evidence="1">Urea amidohydrolase subunit beta</fullName>
    </alternativeName>
</protein>
<gene>
    <name evidence="1" type="primary">ureB</name>
    <name type="ordered locus">CKO_04456</name>
</gene>